<name>ATPE_THEP1</name>
<gene>
    <name evidence="1" type="primary">atpC</name>
    <name type="ordered locus">Tpet_1182</name>
</gene>
<protein>
    <recommendedName>
        <fullName evidence="1">ATP synthase epsilon chain</fullName>
    </recommendedName>
    <alternativeName>
        <fullName evidence="1">ATP synthase F1 sector epsilon subunit</fullName>
    </alternativeName>
    <alternativeName>
        <fullName evidence="1">F-ATPase epsilon subunit</fullName>
    </alternativeName>
</protein>
<accession>A5ILX3</accession>
<organism>
    <name type="scientific">Thermotoga petrophila (strain ATCC BAA-488 / DSM 13995 / JCM 10881 / RKU-1)</name>
    <dbReference type="NCBI Taxonomy" id="390874"/>
    <lineage>
        <taxon>Bacteria</taxon>
        <taxon>Thermotogati</taxon>
        <taxon>Thermotogota</taxon>
        <taxon>Thermotogae</taxon>
        <taxon>Thermotogales</taxon>
        <taxon>Thermotogaceae</taxon>
        <taxon>Thermotoga</taxon>
    </lineage>
</organism>
<keyword id="KW-0066">ATP synthesis</keyword>
<keyword id="KW-0997">Cell inner membrane</keyword>
<keyword id="KW-1003">Cell membrane</keyword>
<keyword id="KW-0139">CF(1)</keyword>
<keyword id="KW-0375">Hydrogen ion transport</keyword>
<keyword id="KW-0406">Ion transport</keyword>
<keyword id="KW-0472">Membrane</keyword>
<keyword id="KW-0813">Transport</keyword>
<dbReference type="EMBL" id="CP000702">
    <property type="protein sequence ID" value="ABQ47196.1"/>
    <property type="molecule type" value="Genomic_DNA"/>
</dbReference>
<dbReference type="RefSeq" id="WP_004082057.1">
    <property type="nucleotide sequence ID" value="NC_009486.1"/>
</dbReference>
<dbReference type="SMR" id="A5ILX3"/>
<dbReference type="STRING" id="390874.Tpet_1182"/>
<dbReference type="KEGG" id="tpt:Tpet_1182"/>
<dbReference type="eggNOG" id="COG0355">
    <property type="taxonomic scope" value="Bacteria"/>
</dbReference>
<dbReference type="HOGENOM" id="CLU_084338_1_0_0"/>
<dbReference type="Proteomes" id="UP000006558">
    <property type="component" value="Chromosome"/>
</dbReference>
<dbReference type="GO" id="GO:0005886">
    <property type="term" value="C:plasma membrane"/>
    <property type="evidence" value="ECO:0007669"/>
    <property type="project" value="UniProtKB-SubCell"/>
</dbReference>
<dbReference type="GO" id="GO:0045259">
    <property type="term" value="C:proton-transporting ATP synthase complex"/>
    <property type="evidence" value="ECO:0007669"/>
    <property type="project" value="UniProtKB-KW"/>
</dbReference>
<dbReference type="GO" id="GO:0005524">
    <property type="term" value="F:ATP binding"/>
    <property type="evidence" value="ECO:0007669"/>
    <property type="project" value="UniProtKB-UniRule"/>
</dbReference>
<dbReference type="GO" id="GO:0046933">
    <property type="term" value="F:proton-transporting ATP synthase activity, rotational mechanism"/>
    <property type="evidence" value="ECO:0007669"/>
    <property type="project" value="UniProtKB-UniRule"/>
</dbReference>
<dbReference type="CDD" id="cd12152">
    <property type="entry name" value="F1-ATPase_delta"/>
    <property type="match status" value="1"/>
</dbReference>
<dbReference type="Gene3D" id="2.60.15.10">
    <property type="entry name" value="F0F1 ATP synthase delta/epsilon subunit, N-terminal"/>
    <property type="match status" value="1"/>
</dbReference>
<dbReference type="HAMAP" id="MF_00530">
    <property type="entry name" value="ATP_synth_epsil_bac"/>
    <property type="match status" value="1"/>
</dbReference>
<dbReference type="InterPro" id="IPR001469">
    <property type="entry name" value="ATP_synth_F1_dsu/esu"/>
</dbReference>
<dbReference type="InterPro" id="IPR020546">
    <property type="entry name" value="ATP_synth_F1_dsu/esu_N"/>
</dbReference>
<dbReference type="InterPro" id="IPR036771">
    <property type="entry name" value="ATPsynth_dsu/esu_N"/>
</dbReference>
<dbReference type="NCBIfam" id="NF009985">
    <property type="entry name" value="PRK13451.1"/>
    <property type="match status" value="1"/>
</dbReference>
<dbReference type="PANTHER" id="PTHR13822">
    <property type="entry name" value="ATP SYNTHASE DELTA/EPSILON CHAIN"/>
    <property type="match status" value="1"/>
</dbReference>
<dbReference type="PANTHER" id="PTHR13822:SF10">
    <property type="entry name" value="ATP SYNTHASE EPSILON CHAIN, CHLOROPLASTIC"/>
    <property type="match status" value="1"/>
</dbReference>
<dbReference type="Pfam" id="PF02823">
    <property type="entry name" value="ATP-synt_DE_N"/>
    <property type="match status" value="1"/>
</dbReference>
<dbReference type="SUPFAM" id="SSF51344">
    <property type="entry name" value="Epsilon subunit of F1F0-ATP synthase N-terminal domain"/>
    <property type="match status" value="1"/>
</dbReference>
<evidence type="ECO:0000255" key="1">
    <source>
        <dbReference type="HAMAP-Rule" id="MF_00530"/>
    </source>
</evidence>
<feature type="chain" id="PRO_1000056548" description="ATP synthase epsilon chain">
    <location>
        <begin position="1"/>
        <end position="108"/>
    </location>
</feature>
<sequence length="108" mass="12329">MKVKIVTPYGIVYDRESDFISFRTVEGSMGILPRRAPIVTQLSVCDVKIKSGDDEYHLKVAGGFLLCDGKDVIIITEEAGREEDISPDRFMEARERVERVRRFFQSSL</sequence>
<proteinExistence type="inferred from homology"/>
<reference key="1">
    <citation type="submission" date="2007-05" db="EMBL/GenBank/DDBJ databases">
        <title>Complete sequence of Thermotoga petrophila RKU-1.</title>
        <authorList>
            <consortium name="US DOE Joint Genome Institute"/>
            <person name="Copeland A."/>
            <person name="Lucas S."/>
            <person name="Lapidus A."/>
            <person name="Barry K."/>
            <person name="Glavina del Rio T."/>
            <person name="Dalin E."/>
            <person name="Tice H."/>
            <person name="Pitluck S."/>
            <person name="Sims D."/>
            <person name="Brettin T."/>
            <person name="Bruce D."/>
            <person name="Detter J.C."/>
            <person name="Han C."/>
            <person name="Tapia R."/>
            <person name="Schmutz J."/>
            <person name="Larimer F."/>
            <person name="Land M."/>
            <person name="Hauser L."/>
            <person name="Kyrpides N."/>
            <person name="Mikhailova N."/>
            <person name="Nelson K."/>
            <person name="Gogarten J.P."/>
            <person name="Noll K."/>
            <person name="Richardson P."/>
        </authorList>
    </citation>
    <scope>NUCLEOTIDE SEQUENCE [LARGE SCALE GENOMIC DNA]</scope>
    <source>
        <strain>ATCC BAA-488 / DSM 13995 / JCM 10881 / RKU-1</strain>
    </source>
</reference>
<comment type="function">
    <text evidence="1">Produces ATP from ADP in the presence of a proton gradient across the membrane.</text>
</comment>
<comment type="subunit">
    <text evidence="1">F-type ATPases have 2 components, CF(1) - the catalytic core - and CF(0) - the membrane proton channel. CF(1) has five subunits: alpha(3), beta(3), gamma(1), delta(1), epsilon(1). CF(0) has three main subunits: a, b and c.</text>
</comment>
<comment type="subcellular location">
    <subcellularLocation>
        <location evidence="1">Cell inner membrane</location>
        <topology evidence="1">Peripheral membrane protein</topology>
    </subcellularLocation>
</comment>
<comment type="similarity">
    <text evidence="1">Belongs to the ATPase epsilon chain family.</text>
</comment>